<gene>
    <name evidence="1" type="primary">proS</name>
    <name type="ordered locus">Bcenmc03_0557</name>
</gene>
<protein>
    <recommendedName>
        <fullName evidence="1">Proline--tRNA ligase</fullName>
        <ecNumber evidence="1">6.1.1.15</ecNumber>
    </recommendedName>
    <alternativeName>
        <fullName evidence="1">Prolyl-tRNA synthetase</fullName>
        <shortName evidence="1">ProRS</shortName>
    </alternativeName>
</protein>
<proteinExistence type="inferred from homology"/>
<dbReference type="EC" id="6.1.1.15" evidence="1"/>
<dbReference type="EMBL" id="CP000958">
    <property type="protein sequence ID" value="ACA89735.1"/>
    <property type="molecule type" value="Genomic_DNA"/>
</dbReference>
<dbReference type="RefSeq" id="WP_011694137.1">
    <property type="nucleotide sequence ID" value="NC_010508.1"/>
</dbReference>
<dbReference type="SMR" id="B1JVA5"/>
<dbReference type="GeneID" id="83047359"/>
<dbReference type="KEGG" id="bcm:Bcenmc03_0557"/>
<dbReference type="HOGENOM" id="CLU_016739_0_0_4"/>
<dbReference type="Proteomes" id="UP000002169">
    <property type="component" value="Chromosome 1"/>
</dbReference>
<dbReference type="GO" id="GO:0005829">
    <property type="term" value="C:cytosol"/>
    <property type="evidence" value="ECO:0007669"/>
    <property type="project" value="TreeGrafter"/>
</dbReference>
<dbReference type="GO" id="GO:0002161">
    <property type="term" value="F:aminoacyl-tRNA deacylase activity"/>
    <property type="evidence" value="ECO:0007669"/>
    <property type="project" value="InterPro"/>
</dbReference>
<dbReference type="GO" id="GO:0005524">
    <property type="term" value="F:ATP binding"/>
    <property type="evidence" value="ECO:0007669"/>
    <property type="project" value="UniProtKB-UniRule"/>
</dbReference>
<dbReference type="GO" id="GO:0004827">
    <property type="term" value="F:proline-tRNA ligase activity"/>
    <property type="evidence" value="ECO:0007669"/>
    <property type="project" value="UniProtKB-UniRule"/>
</dbReference>
<dbReference type="GO" id="GO:0006433">
    <property type="term" value="P:prolyl-tRNA aminoacylation"/>
    <property type="evidence" value="ECO:0007669"/>
    <property type="project" value="UniProtKB-UniRule"/>
</dbReference>
<dbReference type="CDD" id="cd04334">
    <property type="entry name" value="ProRS-INS"/>
    <property type="match status" value="1"/>
</dbReference>
<dbReference type="CDD" id="cd00861">
    <property type="entry name" value="ProRS_anticodon_short"/>
    <property type="match status" value="1"/>
</dbReference>
<dbReference type="CDD" id="cd00779">
    <property type="entry name" value="ProRS_core_prok"/>
    <property type="match status" value="1"/>
</dbReference>
<dbReference type="FunFam" id="3.30.930.10:FF:000043">
    <property type="entry name" value="Proline--tRNA ligase"/>
    <property type="match status" value="1"/>
</dbReference>
<dbReference type="FunFam" id="3.30.930.10:FF:000097">
    <property type="entry name" value="Proline--tRNA ligase"/>
    <property type="match status" value="1"/>
</dbReference>
<dbReference type="Gene3D" id="3.40.50.800">
    <property type="entry name" value="Anticodon-binding domain"/>
    <property type="match status" value="1"/>
</dbReference>
<dbReference type="Gene3D" id="3.30.930.10">
    <property type="entry name" value="Bira Bifunctional Protein, Domain 2"/>
    <property type="match status" value="2"/>
</dbReference>
<dbReference type="Gene3D" id="3.90.960.10">
    <property type="entry name" value="YbaK/aminoacyl-tRNA synthetase-associated domain"/>
    <property type="match status" value="1"/>
</dbReference>
<dbReference type="HAMAP" id="MF_01569">
    <property type="entry name" value="Pro_tRNA_synth_type1"/>
    <property type="match status" value="1"/>
</dbReference>
<dbReference type="InterPro" id="IPR002314">
    <property type="entry name" value="aa-tRNA-synt_IIb"/>
</dbReference>
<dbReference type="InterPro" id="IPR006195">
    <property type="entry name" value="aa-tRNA-synth_II"/>
</dbReference>
<dbReference type="InterPro" id="IPR045864">
    <property type="entry name" value="aa-tRNA-synth_II/BPL/LPL"/>
</dbReference>
<dbReference type="InterPro" id="IPR004154">
    <property type="entry name" value="Anticodon-bd"/>
</dbReference>
<dbReference type="InterPro" id="IPR036621">
    <property type="entry name" value="Anticodon-bd_dom_sf"/>
</dbReference>
<dbReference type="InterPro" id="IPR002316">
    <property type="entry name" value="Pro-tRNA-ligase_IIa"/>
</dbReference>
<dbReference type="InterPro" id="IPR004500">
    <property type="entry name" value="Pro-tRNA-synth_IIa_bac-type"/>
</dbReference>
<dbReference type="InterPro" id="IPR023717">
    <property type="entry name" value="Pro-tRNA-Synthase_IIa_type1"/>
</dbReference>
<dbReference type="InterPro" id="IPR050062">
    <property type="entry name" value="Pro-tRNA_synthetase"/>
</dbReference>
<dbReference type="InterPro" id="IPR044140">
    <property type="entry name" value="ProRS_anticodon_short"/>
</dbReference>
<dbReference type="InterPro" id="IPR033730">
    <property type="entry name" value="ProRS_core_prok"/>
</dbReference>
<dbReference type="InterPro" id="IPR036754">
    <property type="entry name" value="YbaK/aa-tRNA-synt-asso_dom_sf"/>
</dbReference>
<dbReference type="InterPro" id="IPR007214">
    <property type="entry name" value="YbaK/aa-tRNA-synth-assoc-dom"/>
</dbReference>
<dbReference type="NCBIfam" id="NF006625">
    <property type="entry name" value="PRK09194.1"/>
    <property type="match status" value="1"/>
</dbReference>
<dbReference type="NCBIfam" id="TIGR00409">
    <property type="entry name" value="proS_fam_II"/>
    <property type="match status" value="1"/>
</dbReference>
<dbReference type="PANTHER" id="PTHR42753">
    <property type="entry name" value="MITOCHONDRIAL RIBOSOME PROTEIN L39/PROLYL-TRNA LIGASE FAMILY MEMBER"/>
    <property type="match status" value="1"/>
</dbReference>
<dbReference type="PANTHER" id="PTHR42753:SF2">
    <property type="entry name" value="PROLINE--TRNA LIGASE"/>
    <property type="match status" value="1"/>
</dbReference>
<dbReference type="Pfam" id="PF03129">
    <property type="entry name" value="HGTP_anticodon"/>
    <property type="match status" value="1"/>
</dbReference>
<dbReference type="Pfam" id="PF00587">
    <property type="entry name" value="tRNA-synt_2b"/>
    <property type="match status" value="1"/>
</dbReference>
<dbReference type="Pfam" id="PF04073">
    <property type="entry name" value="tRNA_edit"/>
    <property type="match status" value="1"/>
</dbReference>
<dbReference type="PIRSF" id="PIRSF001535">
    <property type="entry name" value="ProRS_1"/>
    <property type="match status" value="1"/>
</dbReference>
<dbReference type="PRINTS" id="PR01046">
    <property type="entry name" value="TRNASYNTHPRO"/>
</dbReference>
<dbReference type="SUPFAM" id="SSF52954">
    <property type="entry name" value="Class II aaRS ABD-related"/>
    <property type="match status" value="1"/>
</dbReference>
<dbReference type="SUPFAM" id="SSF55681">
    <property type="entry name" value="Class II aaRS and biotin synthetases"/>
    <property type="match status" value="1"/>
</dbReference>
<dbReference type="SUPFAM" id="SSF55826">
    <property type="entry name" value="YbaK/ProRS associated domain"/>
    <property type="match status" value="1"/>
</dbReference>
<dbReference type="PROSITE" id="PS50862">
    <property type="entry name" value="AA_TRNA_LIGASE_II"/>
    <property type="match status" value="1"/>
</dbReference>
<feature type="chain" id="PRO_1000199358" description="Proline--tRNA ligase">
    <location>
        <begin position="1"/>
        <end position="578"/>
    </location>
</feature>
<name>SYP_BURO0</name>
<organism>
    <name type="scientific">Burkholderia orbicola (strain MC0-3)</name>
    <dbReference type="NCBI Taxonomy" id="406425"/>
    <lineage>
        <taxon>Bacteria</taxon>
        <taxon>Pseudomonadati</taxon>
        <taxon>Pseudomonadota</taxon>
        <taxon>Betaproteobacteria</taxon>
        <taxon>Burkholderiales</taxon>
        <taxon>Burkholderiaceae</taxon>
        <taxon>Burkholderia</taxon>
        <taxon>Burkholderia cepacia complex</taxon>
        <taxon>Burkholderia orbicola</taxon>
    </lineage>
</organism>
<reference key="1">
    <citation type="submission" date="2008-02" db="EMBL/GenBank/DDBJ databases">
        <title>Complete sequence of chromosome 1 of Burkholderia cenocepacia MC0-3.</title>
        <authorList>
            <person name="Copeland A."/>
            <person name="Lucas S."/>
            <person name="Lapidus A."/>
            <person name="Barry K."/>
            <person name="Bruce D."/>
            <person name="Goodwin L."/>
            <person name="Glavina del Rio T."/>
            <person name="Dalin E."/>
            <person name="Tice H."/>
            <person name="Pitluck S."/>
            <person name="Chain P."/>
            <person name="Malfatti S."/>
            <person name="Shin M."/>
            <person name="Vergez L."/>
            <person name="Schmutz J."/>
            <person name="Larimer F."/>
            <person name="Land M."/>
            <person name="Hauser L."/>
            <person name="Kyrpides N."/>
            <person name="Mikhailova N."/>
            <person name="Tiedje J."/>
            <person name="Richardson P."/>
        </authorList>
    </citation>
    <scope>NUCLEOTIDE SEQUENCE [LARGE SCALE GENOMIC DNA]</scope>
    <source>
        <strain>MC0-3</strain>
    </source>
</reference>
<accession>B1JVA5</accession>
<comment type="function">
    <text evidence="1">Catalyzes the attachment of proline to tRNA(Pro) in a two-step reaction: proline is first activated by ATP to form Pro-AMP and then transferred to the acceptor end of tRNA(Pro). As ProRS can inadvertently accommodate and process non-cognate amino acids such as alanine and cysteine, to avoid such errors it has two additional distinct editing activities against alanine. One activity is designated as 'pretransfer' editing and involves the tRNA(Pro)-independent hydrolysis of activated Ala-AMP. The other activity is designated 'posttransfer' editing and involves deacylation of mischarged Ala-tRNA(Pro). The misacylated Cys-tRNA(Pro) is not edited by ProRS.</text>
</comment>
<comment type="catalytic activity">
    <reaction evidence="1">
        <text>tRNA(Pro) + L-proline + ATP = L-prolyl-tRNA(Pro) + AMP + diphosphate</text>
        <dbReference type="Rhea" id="RHEA:14305"/>
        <dbReference type="Rhea" id="RHEA-COMP:9700"/>
        <dbReference type="Rhea" id="RHEA-COMP:9702"/>
        <dbReference type="ChEBI" id="CHEBI:30616"/>
        <dbReference type="ChEBI" id="CHEBI:33019"/>
        <dbReference type="ChEBI" id="CHEBI:60039"/>
        <dbReference type="ChEBI" id="CHEBI:78442"/>
        <dbReference type="ChEBI" id="CHEBI:78532"/>
        <dbReference type="ChEBI" id="CHEBI:456215"/>
        <dbReference type="EC" id="6.1.1.15"/>
    </reaction>
</comment>
<comment type="subunit">
    <text evidence="1">Homodimer.</text>
</comment>
<comment type="subcellular location">
    <subcellularLocation>
        <location evidence="1">Cytoplasm</location>
    </subcellularLocation>
</comment>
<comment type="domain">
    <text evidence="1">Consists of three domains: the N-terminal catalytic domain, the editing domain and the C-terminal anticodon-binding domain.</text>
</comment>
<comment type="similarity">
    <text evidence="1">Belongs to the class-II aminoacyl-tRNA synthetase family. ProS type 1 subfamily.</text>
</comment>
<keyword id="KW-0030">Aminoacyl-tRNA synthetase</keyword>
<keyword id="KW-0067">ATP-binding</keyword>
<keyword id="KW-0963">Cytoplasm</keyword>
<keyword id="KW-0436">Ligase</keyword>
<keyword id="KW-0547">Nucleotide-binding</keyword>
<keyword id="KW-0648">Protein biosynthesis</keyword>
<evidence type="ECO:0000255" key="1">
    <source>
        <dbReference type="HAMAP-Rule" id="MF_01569"/>
    </source>
</evidence>
<sequence>MKASRFFIGTLKEAPADAEIVSHKLMVRAGMIRRVAGGIYNYLPVGLRSIRKVEAIVREEMNRAGAIELLMPAVQPAELWQESGRWEQYGPELLRFKDRKDNDFVIGPTHEEVVTDIARNQIKSYRQMPVNFYQIQTKFRDEIRPRFGVMRGREFIMKDAYSFDKDAAGLNESYRKMYDAYVRIFTRLGLEFRAVAADSGSIGGNFSHEFHVIADTGEDAIAYCPTSEFAANVEAAEALPLIAERAAPAEAMEKVATPGKAKCEAVAELLSIPLERTIKSIVLATDNEGAEPTIWLVMLRGDHDLNEIKVSKLPGLKNHRFATEQEIVEWFGTPPGYLGPVGTKKPVKVIADRTVANMSDFVVGANEVDYHIAGVNWGRDLPEPEVADVRNVKKGDPSPDGKGVIDICRGIEVGHVFQLGTKYSEAMGATFLDESGKPQPMLMGCYGVGITRILGAAIEQNFDDKGIIWPESIAPFEVVLCPMGYDRSDMVRETADKLYAELVAAGIDVILDDRGERPGVMFADWELIGVPHRLVIGERGLKEGKIEYQGRRDAEATLLPADTAAAAVAEKIRAALAH</sequence>